<name>MSRQ_ECOL5</name>
<dbReference type="EMBL" id="CP000247">
    <property type="protein sequence ID" value="ABG69907.1"/>
    <property type="molecule type" value="Genomic_DNA"/>
</dbReference>
<dbReference type="RefSeq" id="WP_001240062.1">
    <property type="nucleotide sequence ID" value="NC_008253.1"/>
</dbReference>
<dbReference type="SMR" id="Q0TGM2"/>
<dbReference type="KEGG" id="ecp:ECP_1906"/>
<dbReference type="HOGENOM" id="CLU_080662_0_1_6"/>
<dbReference type="Proteomes" id="UP000009182">
    <property type="component" value="Chromosome"/>
</dbReference>
<dbReference type="GO" id="GO:0005886">
    <property type="term" value="C:plasma membrane"/>
    <property type="evidence" value="ECO:0007669"/>
    <property type="project" value="UniProtKB-SubCell"/>
</dbReference>
<dbReference type="GO" id="GO:0009055">
    <property type="term" value="F:electron transfer activity"/>
    <property type="evidence" value="ECO:0007669"/>
    <property type="project" value="UniProtKB-UniRule"/>
</dbReference>
<dbReference type="GO" id="GO:0010181">
    <property type="term" value="F:FMN binding"/>
    <property type="evidence" value="ECO:0007669"/>
    <property type="project" value="UniProtKB-UniRule"/>
</dbReference>
<dbReference type="GO" id="GO:0020037">
    <property type="term" value="F:heme binding"/>
    <property type="evidence" value="ECO:0007669"/>
    <property type="project" value="UniProtKB-UniRule"/>
</dbReference>
<dbReference type="GO" id="GO:0046872">
    <property type="term" value="F:metal ion binding"/>
    <property type="evidence" value="ECO:0007669"/>
    <property type="project" value="UniProtKB-KW"/>
</dbReference>
<dbReference type="GO" id="GO:0016679">
    <property type="term" value="F:oxidoreductase activity, acting on diphenols and related substances as donors"/>
    <property type="evidence" value="ECO:0007669"/>
    <property type="project" value="TreeGrafter"/>
</dbReference>
<dbReference type="GO" id="GO:0030091">
    <property type="term" value="P:protein repair"/>
    <property type="evidence" value="ECO:0007669"/>
    <property type="project" value="UniProtKB-UniRule"/>
</dbReference>
<dbReference type="HAMAP" id="MF_01207">
    <property type="entry name" value="MsrQ"/>
    <property type="match status" value="1"/>
</dbReference>
<dbReference type="InterPro" id="IPR013130">
    <property type="entry name" value="Fe3_Rdtase_TM_dom"/>
</dbReference>
<dbReference type="InterPro" id="IPR022837">
    <property type="entry name" value="MsrQ-like"/>
</dbReference>
<dbReference type="NCBIfam" id="NF003830">
    <property type="entry name" value="PRK05419.1-1"/>
    <property type="match status" value="1"/>
</dbReference>
<dbReference type="NCBIfam" id="NF003831">
    <property type="entry name" value="PRK05419.1-2"/>
    <property type="match status" value="1"/>
</dbReference>
<dbReference type="NCBIfam" id="NF003832">
    <property type="entry name" value="PRK05419.1-4"/>
    <property type="match status" value="1"/>
</dbReference>
<dbReference type="PANTHER" id="PTHR36964">
    <property type="entry name" value="PROTEIN-METHIONINE-SULFOXIDE REDUCTASE HEME-BINDING SUBUNIT MSRQ"/>
    <property type="match status" value="1"/>
</dbReference>
<dbReference type="PANTHER" id="PTHR36964:SF1">
    <property type="entry name" value="PROTEIN-METHIONINE-SULFOXIDE REDUCTASE HEME-BINDING SUBUNIT MSRQ"/>
    <property type="match status" value="1"/>
</dbReference>
<dbReference type="Pfam" id="PF01794">
    <property type="entry name" value="Ferric_reduct"/>
    <property type="match status" value="1"/>
</dbReference>
<feature type="chain" id="PRO_1000066172" description="Protein-methionine-sulfoxide reductase heme-binding subunit MsrQ">
    <location>
        <begin position="1"/>
        <end position="211"/>
    </location>
</feature>
<feature type="transmembrane region" description="Helical" evidence="1">
    <location>
        <begin position="8"/>
        <end position="28"/>
    </location>
</feature>
<feature type="transmembrane region" description="Helical" evidence="1">
    <location>
        <begin position="54"/>
        <end position="74"/>
    </location>
</feature>
<feature type="transmembrane region" description="Helical" evidence="1">
    <location>
        <begin position="82"/>
        <end position="102"/>
    </location>
</feature>
<feature type="transmembrane region" description="Helical" evidence="1">
    <location>
        <begin position="116"/>
        <end position="136"/>
    </location>
</feature>
<feature type="transmembrane region" description="Helical" evidence="1">
    <location>
        <begin position="153"/>
        <end position="173"/>
    </location>
</feature>
<gene>
    <name evidence="1" type="primary">msrQ</name>
    <name type="ordered locus">ECP_1906</name>
</gene>
<reference key="1">
    <citation type="journal article" date="2006" name="Mol. Microbiol.">
        <title>Role of pathogenicity island-associated integrases in the genome plasticity of uropathogenic Escherichia coli strain 536.</title>
        <authorList>
            <person name="Hochhut B."/>
            <person name="Wilde C."/>
            <person name="Balling G."/>
            <person name="Middendorf B."/>
            <person name="Dobrindt U."/>
            <person name="Brzuszkiewicz E."/>
            <person name="Gottschalk G."/>
            <person name="Carniel E."/>
            <person name="Hacker J."/>
        </authorList>
    </citation>
    <scope>NUCLEOTIDE SEQUENCE [LARGE SCALE GENOMIC DNA]</scope>
    <source>
        <strain>536 / UPEC</strain>
    </source>
</reference>
<proteinExistence type="inferred from homology"/>
<organism>
    <name type="scientific">Escherichia coli O6:K15:H31 (strain 536 / UPEC)</name>
    <dbReference type="NCBI Taxonomy" id="362663"/>
    <lineage>
        <taxon>Bacteria</taxon>
        <taxon>Pseudomonadati</taxon>
        <taxon>Pseudomonadota</taxon>
        <taxon>Gammaproteobacteria</taxon>
        <taxon>Enterobacterales</taxon>
        <taxon>Enterobacteriaceae</taxon>
        <taxon>Escherichia</taxon>
    </lineage>
</organism>
<sequence>MRLTAKQVIWLKVCLHLAGLLPFLWLVWAINHGGLGADPVKDIQHFTGRTALKFLLAALLITPLARYAKQPLLIRTRRLLGLWCFAWATLHLTSYALLELGVNNLALLGKELITRPYLTLGIISWVILLALAFTSTQSMQRKLGKHWQQLHNFVYLVAILAPIHYLWSVKIISPQPLMYAGLAVLLLALRYKKLLSLFNRLRKQAHNKLSL</sequence>
<accession>Q0TGM2</accession>
<keyword id="KW-0997">Cell inner membrane</keyword>
<keyword id="KW-1003">Cell membrane</keyword>
<keyword id="KW-0249">Electron transport</keyword>
<keyword id="KW-0285">Flavoprotein</keyword>
<keyword id="KW-0288">FMN</keyword>
<keyword id="KW-0349">Heme</keyword>
<keyword id="KW-0408">Iron</keyword>
<keyword id="KW-0472">Membrane</keyword>
<keyword id="KW-0479">Metal-binding</keyword>
<keyword id="KW-0812">Transmembrane</keyword>
<keyword id="KW-1133">Transmembrane helix</keyword>
<keyword id="KW-0813">Transport</keyword>
<comment type="function">
    <text evidence="1">Part of the MsrPQ system that repairs oxidized periplasmic proteins containing methionine sulfoxide residues (Met-O), using respiratory chain electrons. Thus protects these proteins from oxidative-stress damage caused by reactive species of oxygen and chlorine generated by the host defense mechanisms. MsrPQ is essential for the maintenance of envelope integrity under bleach stress, rescuing a wide series of structurally unrelated periplasmic proteins from methionine oxidation, including the primary periplasmic chaperone SurA and the lipoprotein Pal. MsrQ provides electrons for reduction to the reductase catalytic subunit MsrP, using the quinone pool of the respiratory chain.</text>
</comment>
<comment type="cofactor">
    <cofactor evidence="1">
        <name>FMN</name>
        <dbReference type="ChEBI" id="CHEBI:58210"/>
    </cofactor>
    <text evidence="1">Binds 1 FMN per subunit.</text>
</comment>
<comment type="cofactor">
    <cofactor evidence="1">
        <name>heme b</name>
        <dbReference type="ChEBI" id="CHEBI:60344"/>
    </cofactor>
    <text evidence="1">Binds 1 heme b (iron(II)-protoporphyrin IX) group per subunit.</text>
</comment>
<comment type="subunit">
    <text evidence="1">Heterodimer of a catalytic subunit (MsrP) and a heme-binding subunit (MsrQ).</text>
</comment>
<comment type="subcellular location">
    <subcellularLocation>
        <location evidence="1">Cell inner membrane</location>
        <topology evidence="1">Multi-pass membrane protein</topology>
    </subcellularLocation>
</comment>
<comment type="similarity">
    <text evidence="1">Belongs to the MsrQ family.</text>
</comment>
<protein>
    <recommendedName>
        <fullName evidence="1">Protein-methionine-sulfoxide reductase heme-binding subunit MsrQ</fullName>
    </recommendedName>
    <alternativeName>
        <fullName evidence="1">Flavocytochrome MsrQ</fullName>
    </alternativeName>
</protein>
<evidence type="ECO:0000255" key="1">
    <source>
        <dbReference type="HAMAP-Rule" id="MF_01207"/>
    </source>
</evidence>